<dbReference type="EC" id="2.1.1.242" evidence="1"/>
<dbReference type="EMBL" id="AM286280">
    <property type="protein sequence ID" value="CAL09520.1"/>
    <property type="molecule type" value="Genomic_DNA"/>
</dbReference>
<dbReference type="RefSeq" id="WP_003014447.1">
    <property type="nucleotide sequence ID" value="NC_008245.1"/>
</dbReference>
<dbReference type="SMR" id="Q14GA7"/>
<dbReference type="KEGG" id="ftf:FTF1504"/>
<dbReference type="HOGENOM" id="CLU_076324_1_0_6"/>
<dbReference type="GO" id="GO:0005737">
    <property type="term" value="C:cytoplasm"/>
    <property type="evidence" value="ECO:0007669"/>
    <property type="project" value="UniProtKB-SubCell"/>
</dbReference>
<dbReference type="GO" id="GO:0008990">
    <property type="term" value="F:rRNA (guanine-N2-)-methyltransferase activity"/>
    <property type="evidence" value="ECO:0007669"/>
    <property type="project" value="UniProtKB-UniRule"/>
</dbReference>
<dbReference type="CDD" id="cd02440">
    <property type="entry name" value="AdoMet_MTases"/>
    <property type="match status" value="1"/>
</dbReference>
<dbReference type="Gene3D" id="3.40.50.150">
    <property type="entry name" value="Vaccinia Virus protein VP39"/>
    <property type="match status" value="1"/>
</dbReference>
<dbReference type="HAMAP" id="MF_01523">
    <property type="entry name" value="16SrRNA_methyltr_J"/>
    <property type="match status" value="1"/>
</dbReference>
<dbReference type="InterPro" id="IPR007536">
    <property type="entry name" value="16SrRNA_methylTrfase_J"/>
</dbReference>
<dbReference type="InterPro" id="IPR029063">
    <property type="entry name" value="SAM-dependent_MTases_sf"/>
</dbReference>
<dbReference type="PANTHER" id="PTHR36112">
    <property type="entry name" value="RIBOSOMAL RNA SMALL SUBUNIT METHYLTRANSFERASE J"/>
    <property type="match status" value="1"/>
</dbReference>
<dbReference type="PANTHER" id="PTHR36112:SF1">
    <property type="entry name" value="RIBOSOMAL RNA SMALL SUBUNIT METHYLTRANSFERASE J"/>
    <property type="match status" value="1"/>
</dbReference>
<dbReference type="Pfam" id="PF04445">
    <property type="entry name" value="SAM_MT"/>
    <property type="match status" value="1"/>
</dbReference>
<dbReference type="SUPFAM" id="SSF53335">
    <property type="entry name" value="S-adenosyl-L-methionine-dependent methyltransferases"/>
    <property type="match status" value="1"/>
</dbReference>
<protein>
    <recommendedName>
        <fullName evidence="1">Ribosomal RNA small subunit methyltransferase J</fullName>
        <ecNumber evidence="1">2.1.1.242</ecNumber>
    </recommendedName>
    <alternativeName>
        <fullName evidence="1">16S rRNA m2G1516 methyltransferase</fullName>
    </alternativeName>
    <alternativeName>
        <fullName evidence="1">rRNA (guanine-N(2)-)-methyltransferase</fullName>
    </alternativeName>
</protein>
<gene>
    <name evidence="1" type="primary">rsmJ</name>
    <name type="ordered locus">FTF1504</name>
</gene>
<comment type="function">
    <text evidence="1">Specifically methylates the guanosine in position 1516 of 16S rRNA.</text>
</comment>
<comment type="catalytic activity">
    <reaction evidence="1">
        <text>guanosine(1516) in 16S rRNA + S-adenosyl-L-methionine = N(2)-methylguanosine(1516) in 16S rRNA + S-adenosyl-L-homocysteine + H(+)</text>
        <dbReference type="Rhea" id="RHEA:43220"/>
        <dbReference type="Rhea" id="RHEA-COMP:10412"/>
        <dbReference type="Rhea" id="RHEA-COMP:10413"/>
        <dbReference type="ChEBI" id="CHEBI:15378"/>
        <dbReference type="ChEBI" id="CHEBI:57856"/>
        <dbReference type="ChEBI" id="CHEBI:59789"/>
        <dbReference type="ChEBI" id="CHEBI:74269"/>
        <dbReference type="ChEBI" id="CHEBI:74481"/>
        <dbReference type="EC" id="2.1.1.242"/>
    </reaction>
</comment>
<comment type="subcellular location">
    <subcellularLocation>
        <location evidence="1">Cytoplasm</location>
    </subcellularLocation>
</comment>
<comment type="similarity">
    <text evidence="1">Belongs to the methyltransferase superfamily. RsmJ family.</text>
</comment>
<feature type="chain" id="PRO_0000292633" description="Ribosomal RNA small subunit methyltransferase J">
    <location>
        <begin position="1"/>
        <end position="241"/>
    </location>
</feature>
<feature type="binding site" evidence="1">
    <location>
        <begin position="94"/>
        <end position="95"/>
    </location>
    <ligand>
        <name>S-adenosyl-L-methionine</name>
        <dbReference type="ChEBI" id="CHEBI:59789"/>
    </ligand>
</feature>
<feature type="binding site" evidence="1">
    <location>
        <position position="163"/>
    </location>
    <ligand>
        <name>S-adenosyl-L-methionine</name>
        <dbReference type="ChEBI" id="CHEBI:59789"/>
    </ligand>
</feature>
<organism>
    <name type="scientific">Francisella tularensis subsp. tularensis (strain FSC 198)</name>
    <dbReference type="NCBI Taxonomy" id="393115"/>
    <lineage>
        <taxon>Bacteria</taxon>
        <taxon>Pseudomonadati</taxon>
        <taxon>Pseudomonadota</taxon>
        <taxon>Gammaproteobacteria</taxon>
        <taxon>Thiotrichales</taxon>
        <taxon>Francisellaceae</taxon>
        <taxon>Francisella</taxon>
    </lineage>
</organism>
<keyword id="KW-0963">Cytoplasm</keyword>
<keyword id="KW-0489">Methyltransferase</keyword>
<keyword id="KW-0698">rRNA processing</keyword>
<keyword id="KW-0949">S-adenosyl-L-methionine</keyword>
<keyword id="KW-0808">Transferase</keyword>
<reference key="1">
    <citation type="journal article" date="2007" name="PLoS ONE">
        <title>Genome sequencing shows that European isolates of Francisella tularensis subspecies tularensis are almost identical to US laboratory strain Schu S4.</title>
        <authorList>
            <person name="Chaudhuri R.R."/>
            <person name="Ren C.-P."/>
            <person name="Desmond L."/>
            <person name="Vincent G.A."/>
            <person name="Silman N.J."/>
            <person name="Brehm J.K."/>
            <person name="Elmore M.J."/>
            <person name="Hudson M.J."/>
            <person name="Forsman M."/>
            <person name="Isherwood K.E."/>
            <person name="Gurycova D."/>
            <person name="Minton N.P."/>
            <person name="Titball R.W."/>
            <person name="Pallen M.J."/>
            <person name="Vipond R."/>
        </authorList>
    </citation>
    <scope>NUCLEOTIDE SEQUENCE [LARGE SCALE GENOMIC DNA]</scope>
    <source>
        <strain>FSC 198</strain>
    </source>
</reference>
<accession>Q14GA7</accession>
<name>RSMJ_FRAT1</name>
<proteinExistence type="inferred from homology"/>
<evidence type="ECO:0000255" key="1">
    <source>
        <dbReference type="HAMAP-Rule" id="MF_01523"/>
    </source>
</evidence>
<sequence length="241" mass="27825">MQINISNLDVKNHLDKFIEDRLEYEFCKQDKYLYLENDNLKLHYNNKELFIDFNDSEILNRINPKTKKCSVVQAIEGRSKAKLTILDTTAGLGRDTFTLAARGHTLLTLEKDSYLYLLLKDALQRAQQINYLKEIANRITLINIDSNEYILTTDKSFDCVYVDPMFPPRKKSAKVKQGMQILHQVGFNDEVSNSNLLDNIIQTQISPKAVVKRPINAEFLSNKKPSSQLKGKTNRFDIYSL</sequence>